<protein>
    <recommendedName>
        <fullName evidence="6">Uncharacterized oxidoreductase Elen_0471</fullName>
        <ecNumber evidence="6">1.-.-.-</ecNumber>
    </recommendedName>
    <alternativeName>
        <fullName evidence="6">Dopamine dehydroxylase homolog</fullName>
    </alternativeName>
    <alternativeName>
        <fullName evidence="7">Inactive dopamine dehydroxylase</fullName>
    </alternativeName>
</protein>
<gene>
    <name evidence="8" type="ordered locus">Elen_0471</name>
</gene>
<keyword id="KW-0004">4Fe-4S</keyword>
<keyword id="KW-0408">Iron</keyword>
<keyword id="KW-0411">Iron-sulfur</keyword>
<keyword id="KW-0479">Metal-binding</keyword>
<keyword id="KW-0500">Molybdenum</keyword>
<keyword id="KW-0560">Oxidoreductase</keyword>
<keyword id="KW-1185">Reference proteome</keyword>
<keyword id="KW-0732">Signal</keyword>
<dbReference type="EC" id="1.-.-.-" evidence="6"/>
<dbReference type="EMBL" id="CP001726">
    <property type="protein sequence ID" value="ACV54456.1"/>
    <property type="molecule type" value="Genomic_DNA"/>
</dbReference>
<dbReference type="RefSeq" id="WP_015759999.1">
    <property type="nucleotide sequence ID" value="NC_013204.1"/>
</dbReference>
<dbReference type="SMR" id="C8WLC6"/>
<dbReference type="STRING" id="479437.Elen_0471"/>
<dbReference type="PaxDb" id="479437-Elen_0471"/>
<dbReference type="KEGG" id="ele:Elen_0471"/>
<dbReference type="eggNOG" id="COG0243">
    <property type="taxonomic scope" value="Bacteria"/>
</dbReference>
<dbReference type="HOGENOM" id="CLU_000422_13_3_11"/>
<dbReference type="OrthoDB" id="3169084at2"/>
<dbReference type="BioCyc" id="ELEN479437:G1GFY-473-MONOMER"/>
<dbReference type="Proteomes" id="UP000001377">
    <property type="component" value="Chromosome"/>
</dbReference>
<dbReference type="GO" id="GO:0051539">
    <property type="term" value="F:4 iron, 4 sulfur cluster binding"/>
    <property type="evidence" value="ECO:0007669"/>
    <property type="project" value="UniProtKB-KW"/>
</dbReference>
<dbReference type="GO" id="GO:0018818">
    <property type="term" value="F:acetylene hydratase activity"/>
    <property type="evidence" value="ECO:0007669"/>
    <property type="project" value="InterPro"/>
</dbReference>
<dbReference type="GO" id="GO:0046872">
    <property type="term" value="F:metal ion binding"/>
    <property type="evidence" value="ECO:0007669"/>
    <property type="project" value="UniProtKB-KW"/>
</dbReference>
<dbReference type="GO" id="GO:0043546">
    <property type="term" value="F:molybdopterin cofactor binding"/>
    <property type="evidence" value="ECO:0007669"/>
    <property type="project" value="InterPro"/>
</dbReference>
<dbReference type="GO" id="GO:0016491">
    <property type="term" value="F:oxidoreductase activity"/>
    <property type="evidence" value="ECO:0007669"/>
    <property type="project" value="UniProtKB-KW"/>
</dbReference>
<dbReference type="CDD" id="cd02781">
    <property type="entry name" value="MopB_CT_Acetylene-hydratase"/>
    <property type="match status" value="1"/>
</dbReference>
<dbReference type="Gene3D" id="2.40.40.20">
    <property type="match status" value="1"/>
</dbReference>
<dbReference type="Gene3D" id="3.40.50.740">
    <property type="match status" value="2"/>
</dbReference>
<dbReference type="Gene3D" id="2.20.25.90">
    <property type="entry name" value="ADC-like domains"/>
    <property type="match status" value="1"/>
</dbReference>
<dbReference type="Gene3D" id="3.40.228.10">
    <property type="entry name" value="Dimethylsulfoxide Reductase, domain 2"/>
    <property type="match status" value="2"/>
</dbReference>
<dbReference type="InterPro" id="IPR009010">
    <property type="entry name" value="Asp_de-COase-like_dom_sf"/>
</dbReference>
<dbReference type="InterPro" id="IPR037949">
    <property type="entry name" value="MopB_CT_Acetylene-hydratase"/>
</dbReference>
<dbReference type="InterPro" id="IPR006657">
    <property type="entry name" value="MoPterin_dinucl-bd_dom"/>
</dbReference>
<dbReference type="InterPro" id="IPR006656">
    <property type="entry name" value="Mopterin_OxRdtase"/>
</dbReference>
<dbReference type="InterPro" id="IPR006963">
    <property type="entry name" value="Mopterin_OxRdtase_4Fe-4S_dom"/>
</dbReference>
<dbReference type="InterPro" id="IPR050612">
    <property type="entry name" value="Prok_Mopterin_Oxidored"/>
</dbReference>
<dbReference type="InterPro" id="IPR006311">
    <property type="entry name" value="TAT_signal"/>
</dbReference>
<dbReference type="PANTHER" id="PTHR43742">
    <property type="entry name" value="TRIMETHYLAMINE-N-OXIDE REDUCTASE"/>
    <property type="match status" value="1"/>
</dbReference>
<dbReference type="Pfam" id="PF04879">
    <property type="entry name" value="Molybdop_Fe4S4"/>
    <property type="match status" value="1"/>
</dbReference>
<dbReference type="Pfam" id="PF00384">
    <property type="entry name" value="Molybdopterin"/>
    <property type="match status" value="1"/>
</dbReference>
<dbReference type="Pfam" id="PF01568">
    <property type="entry name" value="Molydop_binding"/>
    <property type="match status" value="1"/>
</dbReference>
<dbReference type="SMART" id="SM00926">
    <property type="entry name" value="Molybdop_Fe4S4"/>
    <property type="match status" value="1"/>
</dbReference>
<dbReference type="SUPFAM" id="SSF50692">
    <property type="entry name" value="ADC-like"/>
    <property type="match status" value="1"/>
</dbReference>
<dbReference type="SUPFAM" id="SSF53706">
    <property type="entry name" value="Formate dehydrogenase/DMSO reductase, domains 1-3"/>
    <property type="match status" value="1"/>
</dbReference>
<dbReference type="PROSITE" id="PS51669">
    <property type="entry name" value="4FE4S_MOW_BIS_MGD"/>
    <property type="match status" value="1"/>
</dbReference>
<dbReference type="PROSITE" id="PS51318">
    <property type="entry name" value="TAT"/>
    <property type="match status" value="1"/>
</dbReference>
<reference key="1">
    <citation type="journal article" date="2009" name="Stand. Genomic Sci.">
        <title>Complete genome sequence of Eggerthella lenta type strain (IPP VPI 0255).</title>
        <authorList>
            <person name="Saunders E."/>
            <person name="Pukall R."/>
            <person name="Abt B."/>
            <person name="Lapidus A."/>
            <person name="Glavina Del Rio T."/>
            <person name="Copeland A."/>
            <person name="Tice H."/>
            <person name="Cheng J.F."/>
            <person name="Lucas S."/>
            <person name="Chen F."/>
            <person name="Nolan M."/>
            <person name="Bruce D."/>
            <person name="Goodwin L."/>
            <person name="Pitluck S."/>
            <person name="Ivanova N."/>
            <person name="Mavromatis K."/>
            <person name="Ovchinnikova G."/>
            <person name="Pati A."/>
            <person name="Chen A."/>
            <person name="Palaniappan K."/>
            <person name="Land M."/>
            <person name="Hauser L."/>
            <person name="Chang Y.J."/>
            <person name="Jeffries C.D."/>
            <person name="Chain P."/>
            <person name="Meincke L."/>
            <person name="Sims D."/>
            <person name="Brettin T."/>
            <person name="Detter J.C."/>
            <person name="Goker M."/>
            <person name="Bristow J."/>
            <person name="Eisen J.A."/>
            <person name="Markowitz V."/>
            <person name="Hugenholtz P."/>
            <person name="Kyrpides N.C."/>
            <person name="Klenk H.P."/>
            <person name="Han C."/>
        </authorList>
    </citation>
    <scope>NUCLEOTIDE SEQUENCE [LARGE SCALE GENOMIC DNA]</scope>
    <source>
        <strain>ATCC 25559 / DSM 2243 / CCUG 17323 / JCM 9979 / KCTC 3265 / NCTC 11813 / VPI 0255 / 1899 B</strain>
    </source>
</reference>
<reference key="2">
    <citation type="journal article" date="2019" name="Science">
        <title>Discovery and inhibition of an interspecies gut bacterial pathway for Levodopa metabolism.</title>
        <authorList>
            <person name="Maini Rekdal V."/>
            <person name="Bess E.N."/>
            <person name="Bisanz J.E."/>
            <person name="Turnbaugh P.J."/>
            <person name="Balskus E.P."/>
        </authorList>
    </citation>
    <scope>LACK OF DOPAMINE DEHYDROXYLATION ACTIVITY</scope>
    <scope>INDUCTION</scope>
    <source>
        <strain>ATCC 25559 / DSM 2243 / CCUG 17323 / JCM 9979 / KCTC 3265 / NCTC 11813 / VPI 0255 / 1899 B</strain>
    </source>
</reference>
<sequence>MGNLTMSRRTFVKTAAITGAAAAAFGASTHTALAEETYSSVSGNDTVAVKTCCRGCGKMECGVKVIVQNGRAIRVEGDEGAFQSMGNCCTKSQSSIQAAYHPDRLHYPMKRTNPKGEEPGWQRISWDEAMQSIVDNFMDIKAKHGGEAIACQVGTSRIWCMHSESILKNMLETPNNVEAWQICKGPRHFATTMVSQFAMSWMETITRPKVYVQWGGASELSNYDDSCRTTVDVASRADVHISVDPRMANMGKEADYWQHLRPGTDGALALAWTNVIIEKKLYDELYVKKWTNAPFLVCEDMEPSGFPTVRTDGSYWDVKTALLKESDIKEGGSPYKFLVYDNNWEKLKAEGVEHEYGAFTWFNADQEGVIDETGGFWEGENYDSEKARQGREAAQDNLLPGQTQGWLPDPMPFDPAIDPALEGEFEITLKDGKTVKVKPVWEHYKARAAEYKPEVAAEITGIPASEIEAAATAYGTRIDPSTGYGNGGIQYMLAVEHFCSAIQNCSAFDNLVGITGNMDTPGGNRGPTIVPIDGDLQGFSAWAPGATTPPEEVNRKQIGIDKFPLLGWWQYWCDSHSLWDAVITGDPYPVRALWNESGNFMSQTNTTRAWEALCSLDFYVDLNLWHTPQNDTADIILPVAHWIELNSPRASQGSAGAMGATVKCVQPPAEAKYDPEIVMDLARRMNWKWTDEPGNEWPDINWQLDDSIKLLTDDELTYTTWHVENGKPTFERHGVPMAEVTPKYKTWDEYVKAFQEHGWWQAKDIEPRNWGTYRRYQTGAMRARDRVWGRLDYTAGKGIGDWKPGWFTPTMKQEIWSTVMESHHPDHPEWRLPTYTEPPHGPKDGDRIKEYPLTATTGRRIPVYFHSEHRQLPWCRELWPVPRVEINPKTAAEYGIEQGDWVWIETEWGKIREVADLYYGVKEDVINLEHTWWYPEVKDAGHGWQFSQVNQLIDHYAQDPHSGTSNLRAYQVKIYKATPENSPFNNPVPCDSTGTPIIHTSDDPRLKEWLPTYEGRE</sequence>
<organism>
    <name type="scientific">Eggerthella lenta (strain ATCC 25559 / DSM 2243 / CCUG 17323 / JCM 9979 / KCTC 3265 / NCTC 11813 / VPI 0255 / 1899 B)</name>
    <name type="common">Eubacterium lentum</name>
    <dbReference type="NCBI Taxonomy" id="479437"/>
    <lineage>
        <taxon>Bacteria</taxon>
        <taxon>Bacillati</taxon>
        <taxon>Actinomycetota</taxon>
        <taxon>Coriobacteriia</taxon>
        <taxon>Eggerthellales</taxon>
        <taxon>Eggerthellaceae</taxon>
        <taxon>Eggerthella</taxon>
    </lineage>
</organism>
<name>DADHH_EGGLE</name>
<feature type="signal peptide" description="Tat-type signal" evidence="3">
    <location>
        <begin position="1"/>
        <end position="34"/>
    </location>
</feature>
<feature type="chain" id="PRO_5002993564" description="Uncharacterized oxidoreductase Elen_0471">
    <location>
        <begin position="35"/>
        <end position="1017"/>
    </location>
</feature>
<feature type="domain" description="4Fe-4S Mo/W bis-MGD-type" evidence="4">
    <location>
        <begin position="45"/>
        <end position="103"/>
    </location>
</feature>
<feature type="active site" description="Electron donor/acceptor" evidence="2">
    <location>
        <position position="91"/>
    </location>
</feature>
<feature type="binding site" evidence="2">
    <location>
        <position position="53"/>
    </location>
    <ligand>
        <name>[4Fe-4S] cluster</name>
        <dbReference type="ChEBI" id="CHEBI:49883"/>
    </ligand>
</feature>
<feature type="binding site" evidence="2">
    <location>
        <position position="56"/>
    </location>
    <ligand>
        <name>[4Fe-4S] cluster</name>
        <dbReference type="ChEBI" id="CHEBI:49883"/>
    </ligand>
</feature>
<feature type="binding site" evidence="2">
    <location>
        <position position="61"/>
    </location>
    <ligand>
        <name>[4Fe-4S] cluster</name>
        <dbReference type="ChEBI" id="CHEBI:49883"/>
    </ligand>
</feature>
<feature type="binding site" evidence="2">
    <location>
        <position position="89"/>
    </location>
    <ligand>
        <name>[4Fe-4S] cluster</name>
        <dbReference type="ChEBI" id="CHEBI:49883"/>
    </ligand>
</feature>
<proteinExistence type="evidence at transcript level"/>
<accession>C8WLC6</accession>
<comment type="cofactor">
    <cofactor evidence="2">
        <name>[4Fe-4S] cluster</name>
        <dbReference type="ChEBI" id="CHEBI:49883"/>
    </cofactor>
    <text evidence="2">Binds 1 [4Fe-4S] cluster.</text>
</comment>
<comment type="cofactor">
    <cofactor evidence="1">
        <name>Mo-bis(molybdopterin guanine dinucleotide)</name>
        <dbReference type="ChEBI" id="CHEBI:60539"/>
    </cofactor>
    <text evidence="2">Binds 1 molybdenum-bis(molybdopterin guanine dinucleotide) (Mo-bis-MGD) cofactor per subunit.</text>
</comment>
<comment type="induction">
    <text evidence="5">Up-regulated in response to dopamine.</text>
</comment>
<comment type="PTM">
    <text evidence="3">Predicted to be exported by the Tat system. The position of the signal peptide cleavage has not been experimentally proven.</text>
</comment>
<comment type="miscellaneous">
    <text evidence="5">E.lenta strain ATCC 25559 / DSM 2243 is not able to dehydroxylate dopamine, likely due to the presence of a serine residue in position 506 in this protein, instead of an arginine residue in dopamine metabolizing strains.</text>
</comment>
<comment type="similarity">
    <text evidence="6">Belongs to the prokaryotic molybdopterin-containing oxidoreductase family.</text>
</comment>
<evidence type="ECO:0000250" key="1">
    <source>
        <dbReference type="UniProtKB" id="A0A369NIV7"/>
    </source>
</evidence>
<evidence type="ECO:0000250" key="2">
    <source>
        <dbReference type="UniProtKB" id="P07658"/>
    </source>
</evidence>
<evidence type="ECO:0000255" key="3">
    <source>
        <dbReference type="PROSITE-ProRule" id="PRU00648"/>
    </source>
</evidence>
<evidence type="ECO:0000255" key="4">
    <source>
        <dbReference type="PROSITE-ProRule" id="PRU01004"/>
    </source>
</evidence>
<evidence type="ECO:0000269" key="5">
    <source>
    </source>
</evidence>
<evidence type="ECO:0000305" key="6"/>
<evidence type="ECO:0000305" key="7">
    <source>
    </source>
</evidence>
<evidence type="ECO:0000312" key="8">
    <source>
        <dbReference type="EMBL" id="ACV54456.1"/>
    </source>
</evidence>